<organism>
    <name type="scientific">Nostoc punctiforme (strain ATCC 29133 / PCC 73102)</name>
    <dbReference type="NCBI Taxonomy" id="63737"/>
    <lineage>
        <taxon>Bacteria</taxon>
        <taxon>Bacillati</taxon>
        <taxon>Cyanobacteriota</taxon>
        <taxon>Cyanophyceae</taxon>
        <taxon>Nostocales</taxon>
        <taxon>Nostocaceae</taxon>
        <taxon>Nostoc</taxon>
    </lineage>
</organism>
<evidence type="ECO:0000255" key="1">
    <source>
        <dbReference type="HAMAP-Rule" id="MF_00074"/>
    </source>
</evidence>
<protein>
    <recommendedName>
        <fullName evidence="1">Ribosomal RNA small subunit methyltransferase G</fullName>
        <ecNumber evidence="1">2.1.1.-</ecNumber>
    </recommendedName>
    <alternativeName>
        <fullName evidence="1">16S rRNA 7-methylguanosine methyltransferase</fullName>
        <shortName evidence="1">16S rRNA m7G methyltransferase</shortName>
    </alternativeName>
</protein>
<gene>
    <name evidence="1" type="primary">rsmG</name>
    <name type="ordered locus">Npun_R5481</name>
</gene>
<dbReference type="EC" id="2.1.1.-" evidence="1"/>
<dbReference type="EMBL" id="CP001037">
    <property type="protein sequence ID" value="ACC83788.1"/>
    <property type="molecule type" value="Genomic_DNA"/>
</dbReference>
<dbReference type="RefSeq" id="WP_012411734.1">
    <property type="nucleotide sequence ID" value="NC_010628.1"/>
</dbReference>
<dbReference type="SMR" id="B2J5Q6"/>
<dbReference type="STRING" id="63737.Npun_R5481"/>
<dbReference type="EnsemblBacteria" id="ACC83788">
    <property type="protein sequence ID" value="ACC83788"/>
    <property type="gene ID" value="Npun_R5481"/>
</dbReference>
<dbReference type="KEGG" id="npu:Npun_R5481"/>
<dbReference type="eggNOG" id="COG0357">
    <property type="taxonomic scope" value="Bacteria"/>
</dbReference>
<dbReference type="HOGENOM" id="CLU_065341_0_2_3"/>
<dbReference type="OrthoDB" id="9808773at2"/>
<dbReference type="PhylomeDB" id="B2J5Q6"/>
<dbReference type="Proteomes" id="UP000001191">
    <property type="component" value="Chromosome"/>
</dbReference>
<dbReference type="GO" id="GO:0005829">
    <property type="term" value="C:cytosol"/>
    <property type="evidence" value="ECO:0007669"/>
    <property type="project" value="TreeGrafter"/>
</dbReference>
<dbReference type="GO" id="GO:0070043">
    <property type="term" value="F:rRNA (guanine-N7-)-methyltransferase activity"/>
    <property type="evidence" value="ECO:0007669"/>
    <property type="project" value="UniProtKB-UniRule"/>
</dbReference>
<dbReference type="FunFam" id="3.40.50.150:FF:000041">
    <property type="entry name" value="Ribosomal RNA small subunit methyltransferase G"/>
    <property type="match status" value="1"/>
</dbReference>
<dbReference type="Gene3D" id="3.40.50.150">
    <property type="entry name" value="Vaccinia Virus protein VP39"/>
    <property type="match status" value="1"/>
</dbReference>
<dbReference type="HAMAP" id="MF_00074">
    <property type="entry name" value="16SrRNA_methyltr_G"/>
    <property type="match status" value="1"/>
</dbReference>
<dbReference type="InterPro" id="IPR003682">
    <property type="entry name" value="rRNA_ssu_MeTfrase_G"/>
</dbReference>
<dbReference type="InterPro" id="IPR029063">
    <property type="entry name" value="SAM-dependent_MTases_sf"/>
</dbReference>
<dbReference type="NCBIfam" id="TIGR00138">
    <property type="entry name" value="rsmG_gidB"/>
    <property type="match status" value="1"/>
</dbReference>
<dbReference type="PANTHER" id="PTHR31760">
    <property type="entry name" value="S-ADENOSYL-L-METHIONINE-DEPENDENT METHYLTRANSFERASES SUPERFAMILY PROTEIN"/>
    <property type="match status" value="1"/>
</dbReference>
<dbReference type="PANTHER" id="PTHR31760:SF0">
    <property type="entry name" value="S-ADENOSYL-L-METHIONINE-DEPENDENT METHYLTRANSFERASES SUPERFAMILY PROTEIN"/>
    <property type="match status" value="1"/>
</dbReference>
<dbReference type="Pfam" id="PF02527">
    <property type="entry name" value="GidB"/>
    <property type="match status" value="1"/>
</dbReference>
<dbReference type="PIRSF" id="PIRSF003078">
    <property type="entry name" value="GidB"/>
    <property type="match status" value="1"/>
</dbReference>
<dbReference type="SUPFAM" id="SSF53335">
    <property type="entry name" value="S-adenosyl-L-methionine-dependent methyltransferases"/>
    <property type="match status" value="1"/>
</dbReference>
<accession>B2J5Q6</accession>
<name>RSMG_NOSP7</name>
<proteinExistence type="inferred from homology"/>
<sequence length="244" mass="27210">MTNLLPEMAEIWQQTLNWQPTVQQQEQFQRLYELILEGNRQLNLTRITDPQEFWEKHLWDSLRGILPLLSGNLPPASPTIIDIGTGAGFPGVPVAMTVPNCTITLLDSTQKKITFLDNILTELALTNTKTIVGRAEKIGQHPQHRMAYDIALIRAVGAVSVCAEYTLPLLKQGGLAIIYRGNWTKDETTALQNAVKLLGGVIESIEQFTTPLSHSIRHCVYLRKVATTPVQFPRPIGVPTQKPL</sequence>
<comment type="function">
    <text evidence="1">Specifically methylates the N7 position of a guanine in 16S rRNA.</text>
</comment>
<comment type="subcellular location">
    <subcellularLocation>
        <location evidence="1">Cytoplasm</location>
    </subcellularLocation>
</comment>
<comment type="similarity">
    <text evidence="1">Belongs to the methyltransferase superfamily. RNA methyltransferase RsmG family.</text>
</comment>
<keyword id="KW-0963">Cytoplasm</keyword>
<keyword id="KW-0489">Methyltransferase</keyword>
<keyword id="KW-1185">Reference proteome</keyword>
<keyword id="KW-0698">rRNA processing</keyword>
<keyword id="KW-0949">S-adenosyl-L-methionine</keyword>
<keyword id="KW-0808">Transferase</keyword>
<reference key="1">
    <citation type="journal article" date="2013" name="Plant Physiol.">
        <title>A Nostoc punctiforme Sugar Transporter Necessary to Establish a Cyanobacterium-Plant Symbiosis.</title>
        <authorList>
            <person name="Ekman M."/>
            <person name="Picossi S."/>
            <person name="Campbell E.L."/>
            <person name="Meeks J.C."/>
            <person name="Flores E."/>
        </authorList>
    </citation>
    <scope>NUCLEOTIDE SEQUENCE [LARGE SCALE GENOMIC DNA]</scope>
    <source>
        <strain>ATCC 29133 / PCC 73102</strain>
    </source>
</reference>
<feature type="chain" id="PRO_1000092641" description="Ribosomal RNA small subunit methyltransferase G">
    <location>
        <begin position="1"/>
        <end position="244"/>
    </location>
</feature>
<feature type="binding site" evidence="1">
    <location>
        <position position="84"/>
    </location>
    <ligand>
        <name>S-adenosyl-L-methionine</name>
        <dbReference type="ChEBI" id="CHEBI:59789"/>
    </ligand>
</feature>
<feature type="binding site" evidence="1">
    <location>
        <position position="89"/>
    </location>
    <ligand>
        <name>S-adenosyl-L-methionine</name>
        <dbReference type="ChEBI" id="CHEBI:59789"/>
    </ligand>
</feature>
<feature type="binding site" evidence="1">
    <location>
        <begin position="107"/>
        <end position="109"/>
    </location>
    <ligand>
        <name>S-adenosyl-L-methionine</name>
        <dbReference type="ChEBI" id="CHEBI:59789"/>
    </ligand>
</feature>
<feature type="binding site" evidence="1">
    <location>
        <begin position="135"/>
        <end position="136"/>
    </location>
    <ligand>
        <name>S-adenosyl-L-methionine</name>
        <dbReference type="ChEBI" id="CHEBI:59789"/>
    </ligand>
</feature>
<feature type="binding site" evidence="1">
    <location>
        <position position="154"/>
    </location>
    <ligand>
        <name>S-adenosyl-L-methionine</name>
        <dbReference type="ChEBI" id="CHEBI:59789"/>
    </ligand>
</feature>